<proteinExistence type="inferred from homology"/>
<reference key="1">
    <citation type="journal article" date="2010" name="Genome Biol.">
        <title>Structure and dynamics of the pan-genome of Streptococcus pneumoniae and closely related species.</title>
        <authorList>
            <person name="Donati C."/>
            <person name="Hiller N.L."/>
            <person name="Tettelin H."/>
            <person name="Muzzi A."/>
            <person name="Croucher N.J."/>
            <person name="Angiuoli S.V."/>
            <person name="Oggioni M."/>
            <person name="Dunning Hotopp J.C."/>
            <person name="Hu F.Z."/>
            <person name="Riley D.R."/>
            <person name="Covacci A."/>
            <person name="Mitchell T.J."/>
            <person name="Bentley S.D."/>
            <person name="Kilian M."/>
            <person name="Ehrlich G.D."/>
            <person name="Rappuoli R."/>
            <person name="Moxon E.R."/>
            <person name="Masignani V."/>
        </authorList>
    </citation>
    <scope>NUCLEOTIDE SEQUENCE [LARGE SCALE GENOMIC DNA]</scope>
    <source>
        <strain>P1031</strain>
    </source>
</reference>
<evidence type="ECO:0000255" key="1">
    <source>
        <dbReference type="HAMAP-Rule" id="MF_00365"/>
    </source>
</evidence>
<sequence>MWLQHLSLKTFRNYKETKIDFNPKLNVFLGRNAQGKTNMLEAIYFLALTRSHRTRTDKNLIHFDEEQLHLSGLVQKKTGSIPLEIELTQKGRVTKVNHLKQARLSDYVGHMNVVLFAPEDLQLIKGAPSIRRKFIDMELGQIKPIYLSDLTNYNHILKQRNTYLKSAQKIDETFLSVLDDQLVDYGCRVMNHRLDFIKKLESFGRKKHFELSNQIEELSISYQSSVNITDKQNLSESFKIALEKSRSRDLFKKNTGVGPHRDDISFYINGMDASFGSQGQHRSLVLSIKLAEIELMESITTESPILLLDDVMSELDNTRQLKLLETISQSIQTFITTTSLDHLQNLPENLSIFTIQDGKASVNGN</sequence>
<keyword id="KW-0067">ATP-binding</keyword>
<keyword id="KW-0963">Cytoplasm</keyword>
<keyword id="KW-0227">DNA damage</keyword>
<keyword id="KW-0234">DNA repair</keyword>
<keyword id="KW-0235">DNA replication</keyword>
<keyword id="KW-0238">DNA-binding</keyword>
<keyword id="KW-0547">Nucleotide-binding</keyword>
<keyword id="KW-0742">SOS response</keyword>
<comment type="function">
    <text evidence="1">The RecF protein is involved in DNA metabolism; it is required for DNA replication and normal SOS inducibility. RecF binds preferentially to single-stranded, linear DNA. It also seems to bind ATP.</text>
</comment>
<comment type="subcellular location">
    <subcellularLocation>
        <location evidence="1">Cytoplasm</location>
    </subcellularLocation>
</comment>
<comment type="similarity">
    <text evidence="1">Belongs to the RecF family.</text>
</comment>
<dbReference type="EMBL" id="CP000920">
    <property type="protein sequence ID" value="ACO21256.1"/>
    <property type="molecule type" value="Genomic_DNA"/>
</dbReference>
<dbReference type="RefSeq" id="WP_000266662.1">
    <property type="nucleotide sequence ID" value="NC_012467.1"/>
</dbReference>
<dbReference type="SMR" id="C1CNK0"/>
<dbReference type="KEGG" id="spp:SPP_2279"/>
<dbReference type="HOGENOM" id="CLU_040267_0_1_9"/>
<dbReference type="GO" id="GO:0005737">
    <property type="term" value="C:cytoplasm"/>
    <property type="evidence" value="ECO:0007669"/>
    <property type="project" value="UniProtKB-SubCell"/>
</dbReference>
<dbReference type="GO" id="GO:0005524">
    <property type="term" value="F:ATP binding"/>
    <property type="evidence" value="ECO:0007669"/>
    <property type="project" value="UniProtKB-UniRule"/>
</dbReference>
<dbReference type="GO" id="GO:0003697">
    <property type="term" value="F:single-stranded DNA binding"/>
    <property type="evidence" value="ECO:0007669"/>
    <property type="project" value="UniProtKB-UniRule"/>
</dbReference>
<dbReference type="GO" id="GO:0006260">
    <property type="term" value="P:DNA replication"/>
    <property type="evidence" value="ECO:0007669"/>
    <property type="project" value="UniProtKB-UniRule"/>
</dbReference>
<dbReference type="GO" id="GO:0000731">
    <property type="term" value="P:DNA synthesis involved in DNA repair"/>
    <property type="evidence" value="ECO:0007669"/>
    <property type="project" value="TreeGrafter"/>
</dbReference>
<dbReference type="GO" id="GO:0006302">
    <property type="term" value="P:double-strand break repair"/>
    <property type="evidence" value="ECO:0007669"/>
    <property type="project" value="TreeGrafter"/>
</dbReference>
<dbReference type="GO" id="GO:0009432">
    <property type="term" value="P:SOS response"/>
    <property type="evidence" value="ECO:0007669"/>
    <property type="project" value="UniProtKB-UniRule"/>
</dbReference>
<dbReference type="CDD" id="cd03242">
    <property type="entry name" value="ABC_RecF"/>
    <property type="match status" value="1"/>
</dbReference>
<dbReference type="FunFam" id="1.20.1050.90:FF:000002">
    <property type="entry name" value="DNA replication and repair protein RecF"/>
    <property type="match status" value="1"/>
</dbReference>
<dbReference type="Gene3D" id="3.40.50.300">
    <property type="entry name" value="P-loop containing nucleotide triphosphate hydrolases"/>
    <property type="match status" value="1"/>
</dbReference>
<dbReference type="Gene3D" id="1.20.1050.90">
    <property type="entry name" value="RecF/RecN/SMC, N-terminal domain"/>
    <property type="match status" value="1"/>
</dbReference>
<dbReference type="HAMAP" id="MF_00365">
    <property type="entry name" value="RecF"/>
    <property type="match status" value="1"/>
</dbReference>
<dbReference type="InterPro" id="IPR001238">
    <property type="entry name" value="DNA-binding_RecF"/>
</dbReference>
<dbReference type="InterPro" id="IPR018078">
    <property type="entry name" value="DNA-binding_RecF_CS"/>
</dbReference>
<dbReference type="InterPro" id="IPR027417">
    <property type="entry name" value="P-loop_NTPase"/>
</dbReference>
<dbReference type="InterPro" id="IPR003395">
    <property type="entry name" value="RecF/RecN/SMC_N"/>
</dbReference>
<dbReference type="InterPro" id="IPR042174">
    <property type="entry name" value="RecF_2"/>
</dbReference>
<dbReference type="NCBIfam" id="TIGR00611">
    <property type="entry name" value="recf"/>
    <property type="match status" value="1"/>
</dbReference>
<dbReference type="PANTHER" id="PTHR32182">
    <property type="entry name" value="DNA REPLICATION AND REPAIR PROTEIN RECF"/>
    <property type="match status" value="1"/>
</dbReference>
<dbReference type="PANTHER" id="PTHR32182:SF0">
    <property type="entry name" value="DNA REPLICATION AND REPAIR PROTEIN RECF"/>
    <property type="match status" value="1"/>
</dbReference>
<dbReference type="Pfam" id="PF02463">
    <property type="entry name" value="SMC_N"/>
    <property type="match status" value="1"/>
</dbReference>
<dbReference type="SUPFAM" id="SSF52540">
    <property type="entry name" value="P-loop containing nucleoside triphosphate hydrolases"/>
    <property type="match status" value="1"/>
</dbReference>
<dbReference type="PROSITE" id="PS00617">
    <property type="entry name" value="RECF_1"/>
    <property type="match status" value="1"/>
</dbReference>
<dbReference type="PROSITE" id="PS00618">
    <property type="entry name" value="RECF_2"/>
    <property type="match status" value="1"/>
</dbReference>
<feature type="chain" id="PRO_1000133705" description="DNA replication and repair protein RecF">
    <location>
        <begin position="1"/>
        <end position="365"/>
    </location>
</feature>
<feature type="binding site" evidence="1">
    <location>
        <begin position="30"/>
        <end position="37"/>
    </location>
    <ligand>
        <name>ATP</name>
        <dbReference type="ChEBI" id="CHEBI:30616"/>
    </ligand>
</feature>
<protein>
    <recommendedName>
        <fullName evidence="1">DNA replication and repair protein RecF</fullName>
    </recommendedName>
</protein>
<accession>C1CNK0</accession>
<organism>
    <name type="scientific">Streptococcus pneumoniae (strain P1031)</name>
    <dbReference type="NCBI Taxonomy" id="488223"/>
    <lineage>
        <taxon>Bacteria</taxon>
        <taxon>Bacillati</taxon>
        <taxon>Bacillota</taxon>
        <taxon>Bacilli</taxon>
        <taxon>Lactobacillales</taxon>
        <taxon>Streptococcaceae</taxon>
        <taxon>Streptococcus</taxon>
    </lineage>
</organism>
<name>RECF_STRZP</name>
<gene>
    <name evidence="1" type="primary">recF</name>
    <name type="ordered locus">SPP_2279</name>
</gene>